<sequence length="150" mass="16469">MPIVDSGSVPALTAAEKATIRTAWAPVYAKYQSTGVDILIKFFTSNPAAQAFFPKFQGLTSADQLKKSMDVRWHAERIINAVNDAVVAMDDTEKMSLKLRELSGKHAKSFQVDPQYFKVLAAVIVDTVLPGDAGLEKLMSMICILLRSSY</sequence>
<name>GLB1_PETMA</name>
<organism>
    <name type="scientific">Petromyzon marinus</name>
    <name type="common">Sea lamprey</name>
    <dbReference type="NCBI Taxonomy" id="7757"/>
    <lineage>
        <taxon>Eukaryota</taxon>
        <taxon>Metazoa</taxon>
        <taxon>Chordata</taxon>
        <taxon>Craniata</taxon>
        <taxon>Vertebrata</taxon>
        <taxon>Cyclostomata</taxon>
        <taxon>Hyperoartia</taxon>
        <taxon>Petromyzontiformes</taxon>
        <taxon>Petromyzontidae</taxon>
        <taxon>Petromyzon</taxon>
    </lineage>
</organism>
<evidence type="ECO:0000250" key="1"/>
<evidence type="ECO:0000255" key="2">
    <source>
        <dbReference type="PROSITE-ProRule" id="PRU00238"/>
    </source>
</evidence>
<comment type="subunit">
    <text>Monomer.</text>
</comment>
<comment type="miscellaneous">
    <text>This is one of the minor globin component of Sea lamprey.</text>
</comment>
<comment type="similarity">
    <text evidence="2">Belongs to the globin family.</text>
</comment>
<protein>
    <recommendedName>
        <fullName>Globin-1</fullName>
    </recommendedName>
    <alternativeName>
        <fullName>Globin I</fullName>
    </alternativeName>
</protein>
<proteinExistence type="evidence at protein level"/>
<reference key="1">
    <citation type="journal article" date="1987" name="Biol. Chem. Hoppe-Seyler">
        <title>Primary structure of the minor haemoglobins from the sea lamprey (Petromyzon marinus, Cyclostomata).</title>
        <authorList>
            <person name="Hombrados I."/>
            <person name="Rodewald K."/>
            <person name="Allard M."/>
            <person name="Neuzil E."/>
            <person name="Braunitzer G."/>
        </authorList>
    </citation>
    <scope>PROTEIN SEQUENCE OF 2-150</scope>
</reference>
<accession>P09967</accession>
<keyword id="KW-0903">Direct protein sequencing</keyword>
<keyword id="KW-0349">Heme</keyword>
<keyword id="KW-0408">Iron</keyword>
<keyword id="KW-0479">Metal-binding</keyword>
<keyword id="KW-0561">Oxygen transport</keyword>
<keyword id="KW-0813">Transport</keyword>
<feature type="initiator methionine" description="Removed" evidence="1">
    <location>
        <position position="1"/>
    </location>
</feature>
<feature type="chain" id="PRO_0000052526" description="Globin-1">
    <location>
        <begin position="2"/>
        <end position="150"/>
    </location>
</feature>
<feature type="domain" description="Globin" evidence="2">
    <location>
        <begin position="11"/>
        <end position="150"/>
    </location>
</feature>
<feature type="binding site" description="distal binding residue" evidence="2">
    <location>
        <position position="74"/>
    </location>
    <ligand>
        <name>heme b</name>
        <dbReference type="ChEBI" id="CHEBI:60344"/>
    </ligand>
    <ligandPart>
        <name>Fe</name>
        <dbReference type="ChEBI" id="CHEBI:18248"/>
    </ligandPart>
</feature>
<feature type="binding site" description="proximal binding residue" evidence="2">
    <location>
        <position position="106"/>
    </location>
    <ligand>
        <name>heme b</name>
        <dbReference type="ChEBI" id="CHEBI:60344"/>
    </ligand>
    <ligandPart>
        <name>Fe</name>
        <dbReference type="ChEBI" id="CHEBI:18248"/>
    </ligandPart>
</feature>
<dbReference type="PIR" id="A26042">
    <property type="entry name" value="A26042"/>
</dbReference>
<dbReference type="RefSeq" id="XP_032826207.1">
    <property type="nucleotide sequence ID" value="XM_032970316.1"/>
</dbReference>
<dbReference type="SMR" id="P09967"/>
<dbReference type="STRING" id="7757.ENSPMAP00000001744"/>
<dbReference type="GeneID" id="116951579"/>
<dbReference type="OrthoDB" id="436496at2759"/>
<dbReference type="Proteomes" id="UP001318040">
    <property type="component" value="Chromosome 43"/>
</dbReference>
<dbReference type="GO" id="GO:0020037">
    <property type="term" value="F:heme binding"/>
    <property type="evidence" value="ECO:0007669"/>
    <property type="project" value="InterPro"/>
</dbReference>
<dbReference type="GO" id="GO:0005506">
    <property type="term" value="F:iron ion binding"/>
    <property type="evidence" value="ECO:0007669"/>
    <property type="project" value="InterPro"/>
</dbReference>
<dbReference type="GO" id="GO:0016491">
    <property type="term" value="F:oxidoreductase activity"/>
    <property type="evidence" value="ECO:0007669"/>
    <property type="project" value="TreeGrafter"/>
</dbReference>
<dbReference type="GO" id="GO:0019825">
    <property type="term" value="F:oxygen binding"/>
    <property type="evidence" value="ECO:0007669"/>
    <property type="project" value="InterPro"/>
</dbReference>
<dbReference type="GO" id="GO:0005344">
    <property type="term" value="F:oxygen carrier activity"/>
    <property type="evidence" value="ECO:0007669"/>
    <property type="project" value="UniProtKB-KW"/>
</dbReference>
<dbReference type="Gene3D" id="1.10.490.10">
    <property type="entry name" value="Globins"/>
    <property type="match status" value="1"/>
</dbReference>
<dbReference type="InterPro" id="IPR000971">
    <property type="entry name" value="Globin"/>
</dbReference>
<dbReference type="InterPro" id="IPR009050">
    <property type="entry name" value="Globin-like_sf"/>
</dbReference>
<dbReference type="InterPro" id="IPR012292">
    <property type="entry name" value="Globin/Proto"/>
</dbReference>
<dbReference type="InterPro" id="IPR013314">
    <property type="entry name" value="Globin_lamprey/hagfish"/>
</dbReference>
<dbReference type="PANTHER" id="PTHR46783">
    <property type="entry name" value="CYTOGLOBIN"/>
    <property type="match status" value="1"/>
</dbReference>
<dbReference type="PANTHER" id="PTHR46783:SF1">
    <property type="entry name" value="CYTOGLOBIN-1-RELATED"/>
    <property type="match status" value="1"/>
</dbReference>
<dbReference type="Pfam" id="PF00042">
    <property type="entry name" value="Globin"/>
    <property type="match status" value="1"/>
</dbReference>
<dbReference type="PRINTS" id="PR01906">
    <property type="entry name" value="FISHGLOBIN"/>
</dbReference>
<dbReference type="SUPFAM" id="SSF46458">
    <property type="entry name" value="Globin-like"/>
    <property type="match status" value="1"/>
</dbReference>
<dbReference type="PROSITE" id="PS01033">
    <property type="entry name" value="GLOBIN"/>
    <property type="match status" value="1"/>
</dbReference>